<comment type="function">
    <text evidence="1">Required for the biogenesis of c-type cytochromes. Possible subunit of a heme lyase (By similarity).</text>
</comment>
<comment type="subcellular location">
    <subcellularLocation>
        <location evidence="3">Membrane</location>
        <topology evidence="3">Single-pass membrane protein</topology>
        <orientation evidence="3">Periplasmic side</orientation>
    </subcellularLocation>
</comment>
<comment type="similarity">
    <text evidence="3">Belongs to the CcmH/CycL/Ccl2/NrfF family.</text>
</comment>
<gene>
    <name type="primary">ccmH</name>
    <name type="ordered locus">PA1482</name>
</gene>
<accession>Q9I3N0</accession>
<feature type="signal peptide" evidence="2">
    <location>
        <begin position="1"/>
        <end position="20"/>
    </location>
</feature>
<feature type="chain" id="PRO_0000287765" description="Cytochrome c-type biogenesis protein CcmH">
    <location>
        <begin position="21"/>
        <end position="155"/>
    </location>
</feature>
<feature type="transmembrane region" description="Helical" evidence="2">
    <location>
        <begin position="105"/>
        <end position="125"/>
    </location>
</feature>
<feature type="binding site" description="covalent" evidence="2">
    <location>
        <position position="45"/>
    </location>
    <ligand>
        <name>heme</name>
        <dbReference type="ChEBI" id="CHEBI:30413"/>
    </ligand>
</feature>
<feature type="binding site" description="covalent" evidence="2">
    <location>
        <position position="48"/>
    </location>
    <ligand>
        <name>heme</name>
        <dbReference type="ChEBI" id="CHEBI:30413"/>
    </ligand>
</feature>
<feature type="helix" evidence="4">
    <location>
        <begin position="21"/>
        <end position="24"/>
    </location>
</feature>
<feature type="helix" evidence="4">
    <location>
        <begin position="30"/>
        <end position="42"/>
    </location>
</feature>
<feature type="strand" evidence="4">
    <location>
        <begin position="48"/>
        <end position="50"/>
    </location>
</feature>
<feature type="turn" evidence="4">
    <location>
        <begin position="53"/>
        <end position="55"/>
    </location>
</feature>
<feature type="helix" evidence="4">
    <location>
        <begin position="59"/>
        <end position="74"/>
    </location>
</feature>
<feature type="helix" evidence="4">
    <location>
        <begin position="78"/>
        <end position="89"/>
    </location>
</feature>
<feature type="turn" evidence="4">
    <location>
        <begin position="90"/>
        <end position="92"/>
    </location>
</feature>
<organism>
    <name type="scientific">Pseudomonas aeruginosa (strain ATCC 15692 / DSM 22644 / CIP 104116 / JCM 14847 / LMG 12228 / 1C / PRS 101 / PAO1)</name>
    <dbReference type="NCBI Taxonomy" id="208964"/>
    <lineage>
        <taxon>Bacteria</taxon>
        <taxon>Pseudomonadati</taxon>
        <taxon>Pseudomonadota</taxon>
        <taxon>Gammaproteobacteria</taxon>
        <taxon>Pseudomonadales</taxon>
        <taxon>Pseudomonadaceae</taxon>
        <taxon>Pseudomonas</taxon>
    </lineage>
</organism>
<keyword id="KW-0002">3D-structure</keyword>
<keyword id="KW-0201">Cytochrome c-type biogenesis</keyword>
<keyword id="KW-0349">Heme</keyword>
<keyword id="KW-0408">Iron</keyword>
<keyword id="KW-0472">Membrane</keyword>
<keyword id="KW-0479">Metal-binding</keyword>
<keyword id="KW-1185">Reference proteome</keyword>
<keyword id="KW-0732">Signal</keyword>
<keyword id="KW-0812">Transmembrane</keyword>
<keyword id="KW-1133">Transmembrane helix</keyword>
<protein>
    <recommendedName>
        <fullName>Cytochrome c-type biogenesis protein CcmH</fullName>
    </recommendedName>
</protein>
<proteinExistence type="evidence at protein level"/>
<name>CCMH_PSEAE</name>
<dbReference type="EMBL" id="AE004091">
    <property type="protein sequence ID" value="AAG04871.1"/>
    <property type="molecule type" value="Genomic_DNA"/>
</dbReference>
<dbReference type="PIR" id="C83460">
    <property type="entry name" value="C83460"/>
</dbReference>
<dbReference type="RefSeq" id="NP_250173.1">
    <property type="nucleotide sequence ID" value="NC_002516.2"/>
</dbReference>
<dbReference type="RefSeq" id="WP_003114292.1">
    <property type="nucleotide sequence ID" value="NZ_QZGE01000005.1"/>
</dbReference>
<dbReference type="PDB" id="2HL7">
    <property type="method" value="X-ray"/>
    <property type="resolution" value="1.70 A"/>
    <property type="chains" value="A=21-100"/>
</dbReference>
<dbReference type="PDBsum" id="2HL7"/>
<dbReference type="SMR" id="Q9I3N0"/>
<dbReference type="FunCoup" id="Q9I3N0">
    <property type="interactions" value="171"/>
</dbReference>
<dbReference type="STRING" id="208964.PA1482"/>
<dbReference type="PaxDb" id="208964-PA1482"/>
<dbReference type="DNASU" id="881029"/>
<dbReference type="GeneID" id="881029"/>
<dbReference type="KEGG" id="pae:PA1482"/>
<dbReference type="PATRIC" id="fig|208964.12.peg.1533"/>
<dbReference type="PseudoCAP" id="PA1482"/>
<dbReference type="HOGENOM" id="CLU_107187_0_0_6"/>
<dbReference type="InParanoid" id="Q9I3N0"/>
<dbReference type="OrthoDB" id="9804975at2"/>
<dbReference type="PhylomeDB" id="Q9I3N0"/>
<dbReference type="BioCyc" id="PAER208964:G1FZ6-1508-MONOMER"/>
<dbReference type="EvolutionaryTrace" id="Q9I3N0"/>
<dbReference type="Proteomes" id="UP000002438">
    <property type="component" value="Chromosome"/>
</dbReference>
<dbReference type="GO" id="GO:0005886">
    <property type="term" value="C:plasma membrane"/>
    <property type="evidence" value="ECO:0000318"/>
    <property type="project" value="GO_Central"/>
</dbReference>
<dbReference type="GO" id="GO:0046872">
    <property type="term" value="F:metal ion binding"/>
    <property type="evidence" value="ECO:0007669"/>
    <property type="project" value="UniProtKB-KW"/>
</dbReference>
<dbReference type="GO" id="GO:0017004">
    <property type="term" value="P:cytochrome complex assembly"/>
    <property type="evidence" value="ECO:0007669"/>
    <property type="project" value="UniProtKB-KW"/>
</dbReference>
<dbReference type="CDD" id="cd16378">
    <property type="entry name" value="CcmH_N"/>
    <property type="match status" value="1"/>
</dbReference>
<dbReference type="FunFam" id="1.10.8.640:FF:000001">
    <property type="entry name" value="Cytochrome c-type biogenesis protein"/>
    <property type="match status" value="1"/>
</dbReference>
<dbReference type="Gene3D" id="1.10.8.640">
    <property type="entry name" value="Cytochrome C biogenesis protein"/>
    <property type="match status" value="1"/>
</dbReference>
<dbReference type="InterPro" id="IPR051263">
    <property type="entry name" value="C-type_cytochrome_biogenesis"/>
</dbReference>
<dbReference type="InterPro" id="IPR005616">
    <property type="entry name" value="CcmH/CycL/Ccl2/NrfF_N"/>
</dbReference>
<dbReference type="InterPro" id="IPR038297">
    <property type="entry name" value="CcmH/CycL/NrfF/Ccl2_sf"/>
</dbReference>
<dbReference type="PANTHER" id="PTHR47870">
    <property type="entry name" value="CYTOCHROME C-TYPE BIOGENESIS PROTEIN CCMH"/>
    <property type="match status" value="1"/>
</dbReference>
<dbReference type="PANTHER" id="PTHR47870:SF1">
    <property type="entry name" value="CYTOCHROME C-TYPE BIOGENESIS PROTEIN CCMH"/>
    <property type="match status" value="1"/>
</dbReference>
<dbReference type="Pfam" id="PF03918">
    <property type="entry name" value="CcmH"/>
    <property type="match status" value="1"/>
</dbReference>
<sequence>MKRFLATALLGLALCGVARAAIDTYEFASDAERERFRNLTQELRCPKCQNQDIADSNAPIAADLRKQIYGQLQQGKSDGEIVDYMVARYGDFVRYKPPVNERTWLLWFGPGALLLFGVLVIGVIVLRRRRTAAKVQTTLSAEEQARLANLLKNDK</sequence>
<reference key="1">
    <citation type="journal article" date="2000" name="Nature">
        <title>Complete genome sequence of Pseudomonas aeruginosa PAO1, an opportunistic pathogen.</title>
        <authorList>
            <person name="Stover C.K."/>
            <person name="Pham X.-Q.T."/>
            <person name="Erwin A.L."/>
            <person name="Mizoguchi S.D."/>
            <person name="Warrener P."/>
            <person name="Hickey M.J."/>
            <person name="Brinkman F.S.L."/>
            <person name="Hufnagle W.O."/>
            <person name="Kowalik D.J."/>
            <person name="Lagrou M."/>
            <person name="Garber R.L."/>
            <person name="Goltry L."/>
            <person name="Tolentino E."/>
            <person name="Westbrock-Wadman S."/>
            <person name="Yuan Y."/>
            <person name="Brody L.L."/>
            <person name="Coulter S.N."/>
            <person name="Folger K.R."/>
            <person name="Kas A."/>
            <person name="Larbig K."/>
            <person name="Lim R.M."/>
            <person name="Smith K.A."/>
            <person name="Spencer D.H."/>
            <person name="Wong G.K.-S."/>
            <person name="Wu Z."/>
            <person name="Paulsen I.T."/>
            <person name="Reizer J."/>
            <person name="Saier M.H. Jr."/>
            <person name="Hancock R.E.W."/>
            <person name="Lory S."/>
            <person name="Olson M.V."/>
        </authorList>
    </citation>
    <scope>NUCLEOTIDE SEQUENCE [LARGE SCALE GENOMIC DNA]</scope>
    <source>
        <strain>ATCC 15692 / DSM 22644 / CIP 104116 / JCM 14847 / LMG 12228 / 1C / PRS 101 / PAO1</strain>
    </source>
</reference>
<evidence type="ECO:0000250" key="1"/>
<evidence type="ECO:0000255" key="2"/>
<evidence type="ECO:0000305" key="3"/>
<evidence type="ECO:0007829" key="4">
    <source>
        <dbReference type="PDB" id="2HL7"/>
    </source>
</evidence>